<feature type="chain" id="PRO_0000054991" description="Probable ATP-dependent RNA helicase DDX5">
    <location>
        <begin position="1"/>
        <end position="614"/>
    </location>
</feature>
<feature type="domain" description="Helicase ATP-binding" evidence="2">
    <location>
        <begin position="125"/>
        <end position="300"/>
    </location>
</feature>
<feature type="domain" description="Helicase C-terminal" evidence="3">
    <location>
        <begin position="328"/>
        <end position="475"/>
    </location>
</feature>
<feature type="region of interest" description="Disordered" evidence="4">
    <location>
        <begin position="1"/>
        <end position="39"/>
    </location>
</feature>
<feature type="region of interest" description="Transactivation domain">
    <location>
        <begin position="477"/>
        <end position="614"/>
    </location>
</feature>
<feature type="region of interest" description="Disordered" evidence="4">
    <location>
        <begin position="477"/>
        <end position="504"/>
    </location>
</feature>
<feature type="short sequence motif" description="Q motif">
    <location>
        <begin position="94"/>
        <end position="122"/>
    </location>
</feature>
<feature type="short sequence motif" description="DEAD box">
    <location>
        <begin position="248"/>
        <end position="251"/>
    </location>
</feature>
<feature type="compositionally biased region" description="Basic and acidic residues" evidence="4">
    <location>
        <begin position="1"/>
        <end position="15"/>
    </location>
</feature>
<feature type="compositionally biased region" description="Basic and acidic residues" evidence="4">
    <location>
        <begin position="488"/>
        <end position="498"/>
    </location>
</feature>
<feature type="binding site">
    <location>
        <begin position="114"/>
        <end position="116"/>
    </location>
    <ligand>
        <name>ATP</name>
        <dbReference type="ChEBI" id="CHEBI:30616"/>
    </ligand>
</feature>
<feature type="binding site">
    <location>
        <position position="121"/>
    </location>
    <ligand>
        <name>ATP</name>
        <dbReference type="ChEBI" id="CHEBI:30616"/>
    </ligand>
</feature>
<feature type="binding site">
    <location>
        <begin position="138"/>
        <end position="145"/>
    </location>
    <ligand>
        <name>ATP</name>
        <dbReference type="ChEBI" id="CHEBI:30616"/>
    </ligand>
</feature>
<feature type="modified residue" description="Phosphoserine" evidence="35">
    <location>
        <position position="24"/>
    </location>
</feature>
<feature type="modified residue" description="N6-acetyllysine; alternate" evidence="32">
    <location>
        <position position="32"/>
    </location>
</feature>
<feature type="modified residue" description="N6-acetyllysine" evidence="32">
    <location>
        <position position="33"/>
    </location>
</feature>
<feature type="modified residue" description="N6-acetyllysine" evidence="32">
    <location>
        <position position="40"/>
    </location>
</feature>
<feature type="modified residue" description="N6-acetyllysine" evidence="1">
    <location>
        <position position="236"/>
    </location>
</feature>
<feature type="modified residue" description="Phosphotyrosine" evidence="31">
    <location>
        <position position="297"/>
    </location>
</feature>
<feature type="modified residue" description="Phosphoserine" evidence="33 34 35">
    <location>
        <position position="480"/>
    </location>
</feature>
<feature type="modified residue" description="Phosphoserine" evidence="35">
    <location>
        <position position="520"/>
    </location>
</feature>
<feature type="cross-link" description="Glycyl lysine isopeptide (Lys-Gly) (interchain with G-Cter in SUMO2); alternate" evidence="40">
    <location>
        <position position="32"/>
    </location>
</feature>
<feature type="cross-link" description="Glycyl lysine isopeptide (Lys-Gly) (interchain with G-Cter in SUMO2)" evidence="40">
    <location>
        <position position="45"/>
    </location>
</feature>
<feature type="cross-link" description="Glycyl lysine isopeptide (Lys-Gly) (interchain with G-Cter in SUMO); alternate">
    <location>
        <position position="53"/>
    </location>
</feature>
<feature type="cross-link" description="Glycyl lysine isopeptide (Lys-Gly) (interchain with G-Cter in SUMO1); alternate" evidence="36">
    <location>
        <position position="53"/>
    </location>
</feature>
<feature type="cross-link" description="Glycyl lysine isopeptide (Lys-Gly) (interchain with G-Cter in SUMO2); alternate" evidence="36 37 38 39 40">
    <location>
        <position position="53"/>
    </location>
</feature>
<feature type="cross-link" description="Glycyl lysine isopeptide (Lys-Gly) (interchain with G-Cter in SUMO2)" evidence="40">
    <location>
        <position position="340"/>
    </location>
</feature>
<feature type="cross-link" description="Glycyl lysine isopeptide (Lys-Gly) (interchain with G-Cter in SUMO2)" evidence="40">
    <location>
        <position position="343"/>
    </location>
</feature>
<feature type="cross-link" description="Glycyl lysine isopeptide (Lys-Gly) (interchain with G-Cter in SUMO2)" evidence="40">
    <location>
        <position position="388"/>
    </location>
</feature>
<feature type="cross-link" description="Glycyl lysine isopeptide (Lys-Gly) (interchain with G-Cter in SUMO2)" evidence="40">
    <location>
        <position position="391"/>
    </location>
</feature>
<feature type="cross-link" description="Glycyl lysine isopeptide (Lys-Gly) (interchain with G-Cter in SUMO2)" evidence="40">
    <location>
        <position position="411"/>
    </location>
</feature>
<feature type="cross-link" description="Glycyl lysine isopeptide (Lys-Gly) (interchain with G-Cter in SUMO2)" evidence="40">
    <location>
        <position position="437"/>
    </location>
</feature>
<feature type="cross-link" description="Glycyl lysine isopeptide (Lys-Gly) (interchain with G-Cter in SUMO2)" evidence="40">
    <location>
        <position position="451"/>
    </location>
</feature>
<feature type="cross-link" description="Glycyl lysine isopeptide (Lys-Gly) (interchain with G-Cter in SUMO2)" evidence="40">
    <location>
        <position position="470"/>
    </location>
</feature>
<feature type="cross-link" description="Glycyl lysine isopeptide (Lys-Gly) (interchain with G-Cter in SUMO2)" evidence="40">
    <location>
        <position position="523"/>
    </location>
</feature>
<feature type="splice variant" id="VSP_056154" description="In isoform 2." evidence="25">
    <location>
        <begin position="85"/>
        <end position="163"/>
    </location>
</feature>
<feature type="sequence variant" id="VAR_029241" description="In dbSNP:rs1140409.">
    <original>S</original>
    <variation>A</variation>
    <location>
        <position position="480"/>
    </location>
</feature>
<feature type="mutagenesis site" description="Abolishes sumoylation, abolishes interaction with HDAC1, increases TP53 coactivation and promotes polyubiquitination." evidence="12 19">
    <original>K</original>
    <variation>R</variation>
    <location>
        <position position="53"/>
    </location>
</feature>
<feature type="mutagenesis site" description="Abolishes sumoylation." evidence="12">
    <original>E</original>
    <variation>A</variation>
    <location>
        <position position="55"/>
    </location>
</feature>
<feature type="mutagenesis site" description="Abolishes RNA helicase activity." evidence="11">
    <original>K</original>
    <variation>R</variation>
    <location>
        <position position="144"/>
    </location>
</feature>
<feature type="mutagenesis site" description="Binds to the tau stem-loop-containing RNA. Inhibits tau exon 10 inclusion and RNA cleavage. Does not inhibit interaction with RBM4." evidence="21">
    <original>R</original>
    <variation>L</variation>
    <location>
        <position position="403"/>
    </location>
</feature>
<feature type="helix" evidence="42">
    <location>
        <begin position="64"/>
        <end position="66"/>
    </location>
</feature>
<feature type="helix" evidence="41">
    <location>
        <begin position="72"/>
        <end position="80"/>
    </location>
</feature>
<feature type="strand" evidence="41">
    <location>
        <begin position="82"/>
        <end position="87"/>
    </location>
</feature>
<feature type="turn" evidence="41">
    <location>
        <begin position="96"/>
        <end position="99"/>
    </location>
</feature>
<feature type="helix" evidence="41">
    <location>
        <begin position="103"/>
        <end position="110"/>
    </location>
</feature>
<feature type="turn" evidence="41">
    <location>
        <begin position="111"/>
        <end position="113"/>
    </location>
</feature>
<feature type="helix" evidence="41">
    <location>
        <begin position="119"/>
        <end position="130"/>
    </location>
</feature>
<feature type="strand" evidence="41">
    <location>
        <begin position="134"/>
        <end position="138"/>
    </location>
</feature>
<feature type="helix" evidence="41">
    <location>
        <begin position="144"/>
        <end position="157"/>
    </location>
</feature>
<feature type="strand" evidence="41">
    <location>
        <begin position="169"/>
        <end position="173"/>
    </location>
</feature>
<feature type="helix" evidence="41">
    <location>
        <begin position="177"/>
        <end position="193"/>
    </location>
</feature>
<feature type="strand" evidence="41">
    <location>
        <begin position="198"/>
        <end position="201"/>
    </location>
</feature>
<feature type="helix" evidence="41">
    <location>
        <begin position="207"/>
        <end position="216"/>
    </location>
</feature>
<feature type="strand" evidence="41">
    <location>
        <begin position="219"/>
        <end position="223"/>
    </location>
</feature>
<feature type="helix" evidence="41">
    <location>
        <begin position="225"/>
        <end position="233"/>
    </location>
</feature>
<feature type="turn" evidence="42">
    <location>
        <begin position="234"/>
        <end position="236"/>
    </location>
</feature>
<feature type="strand" evidence="42">
    <location>
        <begin position="239"/>
        <end position="241"/>
    </location>
</feature>
<feature type="strand" evidence="41">
    <location>
        <begin position="244"/>
        <end position="247"/>
    </location>
</feature>
<feature type="helix" evidence="41">
    <location>
        <begin position="250"/>
        <end position="255"/>
    </location>
</feature>
<feature type="helix" evidence="41">
    <location>
        <begin position="259"/>
        <end position="266"/>
    </location>
</feature>
<feature type="strand" evidence="41">
    <location>
        <begin position="274"/>
        <end position="280"/>
    </location>
</feature>
<feature type="helix" evidence="41">
    <location>
        <begin position="284"/>
        <end position="293"/>
    </location>
</feature>
<feature type="strand" evidence="41">
    <location>
        <begin position="298"/>
        <end position="302"/>
    </location>
</feature>
<proteinExistence type="evidence at protein level"/>
<reference key="1">
    <citation type="journal article" date="1990" name="Nucleic Acids Res.">
        <title>Complete cDNA sequence of the human p68 protein.</title>
        <authorList>
            <person name="Hloch P."/>
            <person name="Stahl H."/>
        </authorList>
    </citation>
    <scope>NUCLEOTIDE SEQUENCE [MRNA] (ISOFORM 1)</scope>
</reference>
<reference key="2">
    <citation type="journal article" date="1991" name="Mol. Cell. Biol.">
        <title>p68 RNA helicase: identification of a nucleolar form and cloning of related genes containing a conserved intron in yeasts.</title>
        <authorList>
            <person name="Iggo R.D."/>
            <person name="Jamieson D.J."/>
            <person name="McNeill S.A."/>
            <person name="Southgate J."/>
            <person name="McPheat J."/>
            <person name="Lane D.P."/>
        </authorList>
    </citation>
    <scope>NUCLEOTIDE SEQUENCE [GENOMIC DNA]</scope>
    <scope>SUBCELLULAR LOCATION</scope>
</reference>
<reference key="3">
    <citation type="journal article" date="2000" name="Nucleic Acids Res.">
        <title>Structure and expression of the human p68 RNA helicase gene.</title>
        <authorList>
            <person name="Roessler O.G."/>
            <person name="Hloch P."/>
            <person name="Schutz N."/>
            <person name="Weitzenegger T."/>
            <person name="Stahl H."/>
        </authorList>
    </citation>
    <scope>NUCLEOTIDE SEQUENCE [GENOMIC DNA]</scope>
</reference>
<reference key="4">
    <citation type="submission" date="2003-05" db="EMBL/GenBank/DDBJ databases">
        <title>Cloning of human full-length CDSs in BD Creator(TM) system donor vector.</title>
        <authorList>
            <person name="Kalnine N."/>
            <person name="Chen X."/>
            <person name="Rolfs A."/>
            <person name="Halleck A."/>
            <person name="Hines L."/>
            <person name="Eisenstein S."/>
            <person name="Koundinya M."/>
            <person name="Raphael J."/>
            <person name="Moreira D."/>
            <person name="Kelley T."/>
            <person name="LaBaer J."/>
            <person name="Lin Y."/>
            <person name="Phelan M."/>
            <person name="Farmer A."/>
        </authorList>
    </citation>
    <scope>NUCLEOTIDE SEQUENCE [LARGE SCALE MRNA] (ISOFORM 1)</scope>
</reference>
<reference key="5">
    <citation type="journal article" date="2004" name="Nat. Genet.">
        <title>Complete sequencing and characterization of 21,243 full-length human cDNAs.</title>
        <authorList>
            <person name="Ota T."/>
            <person name="Suzuki Y."/>
            <person name="Nishikawa T."/>
            <person name="Otsuki T."/>
            <person name="Sugiyama T."/>
            <person name="Irie R."/>
            <person name="Wakamatsu A."/>
            <person name="Hayashi K."/>
            <person name="Sato H."/>
            <person name="Nagai K."/>
            <person name="Kimura K."/>
            <person name="Makita H."/>
            <person name="Sekine M."/>
            <person name="Obayashi M."/>
            <person name="Nishi T."/>
            <person name="Shibahara T."/>
            <person name="Tanaka T."/>
            <person name="Ishii S."/>
            <person name="Yamamoto J."/>
            <person name="Saito K."/>
            <person name="Kawai Y."/>
            <person name="Isono Y."/>
            <person name="Nakamura Y."/>
            <person name="Nagahari K."/>
            <person name="Murakami K."/>
            <person name="Yasuda T."/>
            <person name="Iwayanagi T."/>
            <person name="Wagatsuma M."/>
            <person name="Shiratori A."/>
            <person name="Sudo H."/>
            <person name="Hosoiri T."/>
            <person name="Kaku Y."/>
            <person name="Kodaira H."/>
            <person name="Kondo H."/>
            <person name="Sugawara M."/>
            <person name="Takahashi M."/>
            <person name="Kanda K."/>
            <person name="Yokoi T."/>
            <person name="Furuya T."/>
            <person name="Kikkawa E."/>
            <person name="Omura Y."/>
            <person name="Abe K."/>
            <person name="Kamihara K."/>
            <person name="Katsuta N."/>
            <person name="Sato K."/>
            <person name="Tanikawa M."/>
            <person name="Yamazaki M."/>
            <person name="Ninomiya K."/>
            <person name="Ishibashi T."/>
            <person name="Yamashita H."/>
            <person name="Murakawa K."/>
            <person name="Fujimori K."/>
            <person name="Tanai H."/>
            <person name="Kimata M."/>
            <person name="Watanabe M."/>
            <person name="Hiraoka S."/>
            <person name="Chiba Y."/>
            <person name="Ishida S."/>
            <person name="Ono Y."/>
            <person name="Takiguchi S."/>
            <person name="Watanabe S."/>
            <person name="Yosida M."/>
            <person name="Hotuta T."/>
            <person name="Kusano J."/>
            <person name="Kanehori K."/>
            <person name="Takahashi-Fujii A."/>
            <person name="Hara H."/>
            <person name="Tanase T.-O."/>
            <person name="Nomura Y."/>
            <person name="Togiya S."/>
            <person name="Komai F."/>
            <person name="Hara R."/>
            <person name="Takeuchi K."/>
            <person name="Arita M."/>
            <person name="Imose N."/>
            <person name="Musashino K."/>
            <person name="Yuuki H."/>
            <person name="Oshima A."/>
            <person name="Sasaki N."/>
            <person name="Aotsuka S."/>
            <person name="Yoshikawa Y."/>
            <person name="Matsunawa H."/>
            <person name="Ichihara T."/>
            <person name="Shiohata N."/>
            <person name="Sano S."/>
            <person name="Moriya S."/>
            <person name="Momiyama H."/>
            <person name="Satoh N."/>
            <person name="Takami S."/>
            <person name="Terashima Y."/>
            <person name="Suzuki O."/>
            <person name="Nakagawa S."/>
            <person name="Senoh A."/>
            <person name="Mizoguchi H."/>
            <person name="Goto Y."/>
            <person name="Shimizu F."/>
            <person name="Wakebe H."/>
            <person name="Hishigaki H."/>
            <person name="Watanabe T."/>
            <person name="Sugiyama A."/>
            <person name="Takemoto M."/>
            <person name="Kawakami B."/>
            <person name="Yamazaki M."/>
            <person name="Watanabe K."/>
            <person name="Kumagai A."/>
            <person name="Itakura S."/>
            <person name="Fukuzumi Y."/>
            <person name="Fujimori Y."/>
            <person name="Komiyama M."/>
            <person name="Tashiro H."/>
            <person name="Tanigami A."/>
            <person name="Fujiwara T."/>
            <person name="Ono T."/>
            <person name="Yamada K."/>
            <person name="Fujii Y."/>
            <person name="Ozaki K."/>
            <person name="Hirao M."/>
            <person name="Ohmori Y."/>
            <person name="Kawabata A."/>
            <person name="Hikiji T."/>
            <person name="Kobatake N."/>
            <person name="Inagaki H."/>
            <person name="Ikema Y."/>
            <person name="Okamoto S."/>
            <person name="Okitani R."/>
            <person name="Kawakami T."/>
            <person name="Noguchi S."/>
            <person name="Itoh T."/>
            <person name="Shigeta K."/>
            <person name="Senba T."/>
            <person name="Matsumura K."/>
            <person name="Nakajima Y."/>
            <person name="Mizuno T."/>
            <person name="Morinaga M."/>
            <person name="Sasaki M."/>
            <person name="Togashi T."/>
            <person name="Oyama M."/>
            <person name="Hata H."/>
            <person name="Watanabe M."/>
            <person name="Komatsu T."/>
            <person name="Mizushima-Sugano J."/>
            <person name="Satoh T."/>
            <person name="Shirai Y."/>
            <person name="Takahashi Y."/>
            <person name="Nakagawa K."/>
            <person name="Okumura K."/>
            <person name="Nagase T."/>
            <person name="Nomura N."/>
            <person name="Kikuchi H."/>
            <person name="Masuho Y."/>
            <person name="Yamashita R."/>
            <person name="Nakai K."/>
            <person name="Yada T."/>
            <person name="Nakamura Y."/>
            <person name="Ohara O."/>
            <person name="Isogai T."/>
            <person name="Sugano S."/>
        </authorList>
    </citation>
    <scope>NUCLEOTIDE SEQUENCE [LARGE SCALE MRNA] (ISOFORM 2)</scope>
    <source>
        <tissue>Brain</tissue>
    </source>
</reference>
<reference key="6">
    <citation type="journal article" date="2008" name="Nat. Methods">
        <title>Human protein factory for converting the transcriptome into an in vitro-expressed proteome.</title>
        <authorList>
            <person name="Goshima N."/>
            <person name="Kawamura Y."/>
            <person name="Fukumoto A."/>
            <person name="Miura A."/>
            <person name="Honma R."/>
            <person name="Satoh R."/>
            <person name="Wakamatsu A."/>
            <person name="Yamamoto J."/>
            <person name="Kimura K."/>
            <person name="Nishikawa T."/>
            <person name="Andoh T."/>
            <person name="Iida Y."/>
            <person name="Ishikawa K."/>
            <person name="Ito E."/>
            <person name="Kagawa N."/>
            <person name="Kaminaga C."/>
            <person name="Kanehori K."/>
            <person name="Kawakami B."/>
            <person name="Kenmochi K."/>
            <person name="Kimura R."/>
            <person name="Kobayashi M."/>
            <person name="Kuroita T."/>
            <person name="Kuwayama H."/>
            <person name="Maruyama Y."/>
            <person name="Matsuo K."/>
            <person name="Minami K."/>
            <person name="Mitsubori M."/>
            <person name="Mori M."/>
            <person name="Morishita R."/>
            <person name="Murase A."/>
            <person name="Nishikawa A."/>
            <person name="Nishikawa S."/>
            <person name="Okamoto T."/>
            <person name="Sakagami N."/>
            <person name="Sakamoto Y."/>
            <person name="Sasaki Y."/>
            <person name="Seki T."/>
            <person name="Sono S."/>
            <person name="Sugiyama A."/>
            <person name="Sumiya T."/>
            <person name="Takayama T."/>
            <person name="Takayama Y."/>
            <person name="Takeda H."/>
            <person name="Togashi T."/>
            <person name="Yahata K."/>
            <person name="Yamada H."/>
            <person name="Yanagisawa Y."/>
            <person name="Endo Y."/>
            <person name="Imamoto F."/>
            <person name="Kisu Y."/>
            <person name="Tanaka S."/>
            <person name="Isogai T."/>
            <person name="Imai J."/>
            <person name="Watanabe S."/>
            <person name="Nomura N."/>
        </authorList>
    </citation>
    <scope>NUCLEOTIDE SEQUENCE [LARGE SCALE MRNA] (ISOFORM 1)</scope>
</reference>
<reference key="7">
    <citation type="journal article" date="2006" name="Nature">
        <title>DNA sequence of human chromosome 17 and analysis of rearrangement in the human lineage.</title>
        <authorList>
            <person name="Zody M.C."/>
            <person name="Garber M."/>
            <person name="Adams D.J."/>
            <person name="Sharpe T."/>
            <person name="Harrow J."/>
            <person name="Lupski J.R."/>
            <person name="Nicholson C."/>
            <person name="Searle S.M."/>
            <person name="Wilming L."/>
            <person name="Young S.K."/>
            <person name="Abouelleil A."/>
            <person name="Allen N.R."/>
            <person name="Bi W."/>
            <person name="Bloom T."/>
            <person name="Borowsky M.L."/>
            <person name="Bugalter B.E."/>
            <person name="Butler J."/>
            <person name="Chang J.L."/>
            <person name="Chen C.-K."/>
            <person name="Cook A."/>
            <person name="Corum B."/>
            <person name="Cuomo C.A."/>
            <person name="de Jong P.J."/>
            <person name="DeCaprio D."/>
            <person name="Dewar K."/>
            <person name="FitzGerald M."/>
            <person name="Gilbert J."/>
            <person name="Gibson R."/>
            <person name="Gnerre S."/>
            <person name="Goldstein S."/>
            <person name="Grafham D.V."/>
            <person name="Grocock R."/>
            <person name="Hafez N."/>
            <person name="Hagopian D.S."/>
            <person name="Hart E."/>
            <person name="Norman C.H."/>
            <person name="Humphray S."/>
            <person name="Jaffe D.B."/>
            <person name="Jones M."/>
            <person name="Kamal M."/>
            <person name="Khodiyar V.K."/>
            <person name="LaButti K."/>
            <person name="Laird G."/>
            <person name="Lehoczky J."/>
            <person name="Liu X."/>
            <person name="Lokyitsang T."/>
            <person name="Loveland J."/>
            <person name="Lui A."/>
            <person name="Macdonald P."/>
            <person name="Major J.E."/>
            <person name="Matthews L."/>
            <person name="Mauceli E."/>
            <person name="McCarroll S.A."/>
            <person name="Mihalev A.H."/>
            <person name="Mudge J."/>
            <person name="Nguyen C."/>
            <person name="Nicol R."/>
            <person name="O'Leary S.B."/>
            <person name="Osoegawa K."/>
            <person name="Schwartz D.C."/>
            <person name="Shaw-Smith C."/>
            <person name="Stankiewicz P."/>
            <person name="Steward C."/>
            <person name="Swarbreck D."/>
            <person name="Venkataraman V."/>
            <person name="Whittaker C.A."/>
            <person name="Yang X."/>
            <person name="Zimmer A.R."/>
            <person name="Bradley A."/>
            <person name="Hubbard T."/>
            <person name="Birren B.W."/>
            <person name="Rogers J."/>
            <person name="Lander E.S."/>
            <person name="Nusbaum C."/>
        </authorList>
    </citation>
    <scope>NUCLEOTIDE SEQUENCE [LARGE SCALE GENOMIC DNA]</scope>
</reference>
<reference key="8">
    <citation type="submission" date="2005-09" db="EMBL/GenBank/DDBJ databases">
        <authorList>
            <person name="Mural R.J."/>
            <person name="Istrail S."/>
            <person name="Sutton G.G."/>
            <person name="Florea L."/>
            <person name="Halpern A.L."/>
            <person name="Mobarry C.M."/>
            <person name="Lippert R."/>
            <person name="Walenz B."/>
            <person name="Shatkay H."/>
            <person name="Dew I."/>
            <person name="Miller J.R."/>
            <person name="Flanigan M.J."/>
            <person name="Edwards N.J."/>
            <person name="Bolanos R."/>
            <person name="Fasulo D."/>
            <person name="Halldorsson B.V."/>
            <person name="Hannenhalli S."/>
            <person name="Turner R."/>
            <person name="Yooseph S."/>
            <person name="Lu F."/>
            <person name="Nusskern D.R."/>
            <person name="Shue B.C."/>
            <person name="Zheng X.H."/>
            <person name="Zhong F."/>
            <person name="Delcher A.L."/>
            <person name="Huson D.H."/>
            <person name="Kravitz S.A."/>
            <person name="Mouchard L."/>
            <person name="Reinert K."/>
            <person name="Remington K.A."/>
            <person name="Clark A.G."/>
            <person name="Waterman M.S."/>
            <person name="Eichler E.E."/>
            <person name="Adams M.D."/>
            <person name="Hunkapiller M.W."/>
            <person name="Myers E.W."/>
            <person name="Venter J.C."/>
        </authorList>
    </citation>
    <scope>NUCLEOTIDE SEQUENCE [LARGE SCALE GENOMIC DNA]</scope>
</reference>
<reference key="9">
    <citation type="journal article" date="2004" name="Genome Res.">
        <title>The status, quality, and expansion of the NIH full-length cDNA project: the Mammalian Gene Collection (MGC).</title>
        <authorList>
            <consortium name="The MGC Project Team"/>
        </authorList>
    </citation>
    <scope>NUCLEOTIDE SEQUENCE [LARGE SCALE MRNA] (ISOFORM 1)</scope>
    <source>
        <tissue>Muscle</tissue>
    </source>
</reference>
<reference key="10">
    <citation type="journal article" date="1988" name="Nature">
        <title>Nuclear protein with sequence homology to translation initiation factor eIF-4A.</title>
        <authorList>
            <person name="Ford M.J."/>
            <person name="Anton I.A."/>
            <person name="Lane D.P."/>
        </authorList>
    </citation>
    <scope>NUCLEOTIDE SEQUENCE [MRNA] OF 21-614 (ISOFORM 1)</scope>
</reference>
<reference key="11">
    <citation type="submission" date="1998-09" db="EMBL/GenBank/DDBJ databases">
        <title>Molecular organization of the murine p68 RNA helicase gene promotor region.</title>
        <authorList>
            <person name="Petry P."/>
            <person name="Bammer S."/>
            <person name="Heinlein U.A.O."/>
        </authorList>
    </citation>
    <scope>NUCLEOTIDE SEQUENCE [GENOMIC DNA] OF 53-163</scope>
</reference>
<reference key="12">
    <citation type="journal article" date="1999" name="Mol. Cell. Biol.">
        <title>Purification and identification of p68 RNA helicase acting as a transcriptional coactivator specific for the activation function 1 of human estrogen receptor alpha.</title>
        <authorList>
            <person name="Endoh H."/>
            <person name="Maruyama K."/>
            <person name="Masuhiro Y."/>
            <person name="Kobayashi Y."/>
            <person name="Goto M."/>
            <person name="Tai H."/>
            <person name="Yanagisawa J."/>
            <person name="Metzger D."/>
            <person name="Hashimoto S."/>
            <person name="Kato S."/>
        </authorList>
    </citation>
    <scope>RETRACTED PAPER</scope>
</reference>
<reference key="13">
    <citation type="journal article" date="2014" name="Mol. Cell. Biol.">
        <authorList>
            <person name="Endoh H."/>
            <person name="Maruyama K."/>
            <person name="Masuhiro Y."/>
            <person name="Kobayashi Y."/>
            <person name="Goto M."/>
            <person name="Tai H."/>
            <person name="Yanagisawa J."/>
            <person name="Metzger D."/>
            <person name="Hashimoto S."/>
            <person name="Kato S."/>
        </authorList>
    </citation>
    <scope>RETRACTION NOTICE OF PUBMED:10409727</scope>
</reference>
<reference key="14">
    <citation type="journal article" date="2003" name="Nature">
        <title>Proteomic characterization of the human centrosome by protein correlation profiling.</title>
        <authorList>
            <person name="Andersen J.S."/>
            <person name="Wilkinson C.J."/>
            <person name="Mayor T."/>
            <person name="Mortensen P."/>
            <person name="Nigg E.A."/>
            <person name="Mann M."/>
        </authorList>
    </citation>
    <scope>IDENTIFICATION BY MASS SPECTROMETRY</scope>
    <source>
        <tissue>Lymphoblast</tissue>
    </source>
</reference>
<reference key="15">
    <citation type="journal article" date="2012" name="J. Cell. Biochem.">
        <title>The DEAD-box RNA helicase DDX3 interacts with DDX5, co-localizes with it in the cytoplasm during the G2/M phase of the cycle, and affects its shuttling during mRNP export.</title>
        <authorList>
            <person name="Choi Y.J."/>
            <person name="Lee S.G."/>
        </authorList>
    </citation>
    <scope>INTERACTION WITH DDX3</scope>
    <scope>SUBCELLULAR LOCATION</scope>
    <scope>PHOSPHORYLATION</scope>
</reference>
<reference key="16">
    <citation type="journal article" date="2000" name="Exp. Cell Res.">
        <title>The nuclear DEAD box RNA helicase p68 interacts with the nucleolar protein fibrillarin and colocalizes specifically in nascent nucleoli during telophase.</title>
        <authorList>
            <person name="Nicol S.M."/>
            <person name="Causevic M."/>
            <person name="Prescott A.R."/>
            <person name="Fuller-Pace F.V."/>
        </authorList>
    </citation>
    <scope>INTERACTION WITH FBL</scope>
    <scope>SUBCELLULAR LOCATION</scope>
</reference>
<reference key="17">
    <citation type="journal article" date="2001" name="EMBO J.">
        <title>A subfamily of RNA-binding DEAD-box proteins acts as an estrogen receptor alpha coactivator through the N-terminal activation domain (AF-1) with an RNA coactivator, SRA.</title>
        <authorList>
            <person name="Watanabe M."/>
            <person name="Yanagisawa J."/>
            <person name="Kitagawa H."/>
            <person name="Takeyama K."/>
            <person name="Ogawa S."/>
            <person name="Arao Y."/>
            <person name="Suzawa M."/>
            <person name="Kobayashi Y."/>
            <person name="Yano T."/>
            <person name="Yoshikawa H."/>
            <person name="Masuhiro Y."/>
            <person name="Kato S."/>
        </authorList>
    </citation>
    <scope>RETRACTED PAPER</scope>
</reference>
<reference key="18">
    <citation type="journal article" date="2014" name="EMBO J.">
        <authorList>
            <person name="Watanabe M."/>
            <person name="Yanagisawa J."/>
            <person name="Kitagawa H."/>
            <person name="Takeyama K."/>
            <person name="Ogawa S."/>
            <person name="Arao Y."/>
            <person name="Suzawa M."/>
            <person name="Kobayashi Y."/>
            <person name="Yano T."/>
            <person name="Yoshikawa H."/>
            <person name="Masuhiro Y."/>
            <person name="Kato S."/>
        </authorList>
    </citation>
    <scope>RETRACTION NOTICE OF PUBMED:11250900</scope>
</reference>
<reference key="19">
    <citation type="journal article" date="2002" name="RNA">
        <title>Purification and characterization of native spliceosomes suitable for three-dimensional structural analysis.</title>
        <authorList>
            <person name="Jurica M.S."/>
            <person name="Licklider L.J."/>
            <person name="Gygi S.P."/>
            <person name="Grigorieff N."/>
            <person name="Moore M.J."/>
        </authorList>
    </citation>
    <scope>IDENTIFICATION BY MASS SPECTROMETRY</scope>
    <scope>IDENTIFICATION IN THE SPLICEOSOMAL C COMPLEX</scope>
</reference>
<reference key="20">
    <citation type="journal article" date="2003" name="Nucleic Acids Res.">
        <title>The highly related DEAD box RNA helicases p68 and p72 exist as heterodimers in cells.</title>
        <authorList>
            <person name="Ogilvie V.C."/>
            <person name="Wilson B.J."/>
            <person name="Nicol S.M."/>
            <person name="Morrice N.A."/>
            <person name="Saunders L.R."/>
            <person name="Barber G.N."/>
            <person name="Fuller-Pace F.V."/>
        </authorList>
    </citation>
    <scope>SELF-ASSOCIATION</scope>
    <scope>INTERACTION WITH DDX17</scope>
</reference>
<reference key="21">
    <citation type="journal article" date="2003" name="Oncogene">
        <title>Synergism between p68 RNA helicase and the transcriptional coactivators CBP and p300.</title>
        <authorList>
            <person name="Rossow K.L."/>
            <person name="Janknecht R."/>
        </authorList>
    </citation>
    <scope>FUNCTION AS TRANSCRIPTIONAL COACTIVATOR</scope>
    <scope>INTERACTION WITH EP300; CREBBP AND POLR2A</scope>
</reference>
<reference key="22">
    <citation type="journal article" date="2004" name="BMC Mol. Biol.">
        <title>The p68 and p72 DEAD box RNA helicases interact with HDAC1 and repress transcription in a promoter-specific manner.</title>
        <authorList>
            <person name="Wilson B.J."/>
            <person name="Bates G.J."/>
            <person name="Nicol S.M."/>
            <person name="Gregory D.J."/>
            <person name="Perkins N.D."/>
            <person name="Fuller-Pace F.V."/>
        </authorList>
    </citation>
    <scope>FUNCTION IN TRANSCRIPTIONAL REPRESSION</scope>
    <scope>INTERACTION WITH HDAC1</scope>
</reference>
<reference key="23">
    <citation type="journal article" date="2005" name="EMBO J.">
        <title>The DEAD box protein p68: a novel transcriptional coactivator of the p53 tumour suppressor.</title>
        <authorList>
            <person name="Bates G.J."/>
            <person name="Nicol S.M."/>
            <person name="Wilson B.J."/>
            <person name="Jacobs A.M."/>
            <person name="Bourdon J.C."/>
            <person name="Wardrop J."/>
            <person name="Gregory D.J."/>
            <person name="Lane D.P."/>
            <person name="Perkins N.D."/>
            <person name="Fuller-Pace F.V."/>
        </authorList>
    </citation>
    <scope>FUNCTION AS TRANSCRIPTIONAL COACTIVATOR</scope>
    <scope>INTERACTION WITH TP53</scope>
</reference>
<reference key="24">
    <citation type="journal article" date="2005" name="Nat. Biotechnol.">
        <title>Immunoaffinity profiling of tyrosine phosphorylation in cancer cells.</title>
        <authorList>
            <person name="Rush J."/>
            <person name="Moritz A."/>
            <person name="Lee K.A."/>
            <person name="Guo A."/>
            <person name="Goss V.L."/>
            <person name="Spek E.J."/>
            <person name="Zhang H."/>
            <person name="Zha X.-M."/>
            <person name="Polakiewicz R.D."/>
            <person name="Comb M.J."/>
        </authorList>
    </citation>
    <scope>PHOSPHORYLATION [LARGE SCALE ANALYSIS] AT TYR-297</scope>
    <scope>IDENTIFICATION BY MASS SPECTROMETRY [LARGE SCALE ANALYSIS]</scope>
</reference>
<reference key="25">
    <citation type="journal article" date="2006" name="Dev. Cell">
        <title>The RNA helicases p68/p72 and the noncoding RNA SRA are coregulators of MyoD and skeletal muscle differentiation.</title>
        <authorList>
            <person name="Caretti G."/>
            <person name="Schiltz R.L."/>
            <person name="Dilworth F.J."/>
            <person name="Di Padova M."/>
            <person name="Zhao P."/>
            <person name="Ogryzko V."/>
            <person name="Fuller-Pace F.V."/>
            <person name="Hoffman E.P."/>
            <person name="Tapscott S.J."/>
            <person name="Sartorelli V."/>
        </authorList>
    </citation>
    <scope>FUNCTION</scope>
    <scope>INTERACTION WITH MYOD1</scope>
    <scope>MUTAGENESIS OF LYS-144</scope>
</reference>
<reference key="26">
    <citation type="journal article" date="2007" name="EMBO Rep.">
        <title>Proteomic and functional analysis of Argonaute-containing mRNA-protein complexes in human cells.</title>
        <authorList>
            <person name="Hoeck J."/>
            <person name="Weinmann L."/>
            <person name="Ender C."/>
            <person name="Ruedel S."/>
            <person name="Kremmer E."/>
            <person name="Raabe M."/>
            <person name="Urlaub H."/>
            <person name="Meister G."/>
        </authorList>
    </citation>
    <scope>INTERACTION WITH AGO1 AND AGO2</scope>
</reference>
<reference key="27">
    <citation type="journal article" date="2007" name="Oncogene">
        <title>SUMO modification of the DEAD box protein p68 modulates its transcriptional activity and promotes its interaction with HDAC1.</title>
        <authorList>
            <person name="Jacobs A.M."/>
            <person name="Nicol S.M."/>
            <person name="Hislop R.G."/>
            <person name="Jaffray E.G."/>
            <person name="Hay R.T."/>
            <person name="Fuller-Pace F.V."/>
        </authorList>
    </citation>
    <scope>SUMOYLATION AT LYS-53</scope>
    <scope>INTERACTION WITH HDAC1 AND PIAS1</scope>
    <scope>MUTAGENESIS OF LYS-53 AND GLU-55</scope>
</reference>
<reference key="28">
    <citation type="journal article" date="2008" name="Cancer Res.">
        <title>The RNA helicase p68 is a novel androgen receptor coactivator involved in splicing and is overexpressed in prostate cancer.</title>
        <authorList>
            <person name="Clark E.L."/>
            <person name="Coulson A."/>
            <person name="Dalgliesh C."/>
            <person name="Rajan P."/>
            <person name="Nicol S.M."/>
            <person name="Fleming S."/>
            <person name="Heer R."/>
            <person name="Gaughan L."/>
            <person name="Leung H.Y."/>
            <person name="Elliott D.J."/>
            <person name="Fuller-Pace F.V."/>
            <person name="Robson C.N."/>
        </authorList>
    </citation>
    <scope>FUNCTION AS TRANSCRIPTIONAL COACTIVATOR</scope>
    <scope>INTERACTION WITH AR</scope>
</reference>
<reference key="29">
    <citation type="journal article" date="2008" name="Exp. Cell Res.">
        <title>Transcription-dependent nucleolar cap localization and possible nuclear function of DExH RNA helicase RHAU.</title>
        <authorList>
            <person name="Iwamoto F."/>
            <person name="Stadler M."/>
            <person name="Chalupnikova K."/>
            <person name="Oakeley E."/>
            <person name="Nagamine Y."/>
        </authorList>
    </citation>
    <scope>INTERACTION WITH DHX36</scope>
</reference>
<reference key="30">
    <citation type="journal article" date="2008" name="J. Cell. Biochem.">
        <title>p68 (Ddx5) interacts with Runx2 and regulates osteoblast differentiation.</title>
        <authorList>
            <person name="Jensen E.D."/>
            <person name="Niu L."/>
            <person name="Caretti G."/>
            <person name="Nicol S.M."/>
            <person name="Teplyuk N."/>
            <person name="Stein G.S."/>
            <person name="Sartorelli V."/>
            <person name="van Wijnen A.J."/>
            <person name="Fuller-Pace F.V."/>
            <person name="Westendorf J.J."/>
        </authorList>
    </citation>
    <scope>FUNCTION</scope>
    <scope>INTERACTION WITH RUNX2</scope>
</reference>
<reference key="31">
    <citation type="journal article" date="2008" name="Proc. Natl. Acad. Sci. U.S.A.">
        <title>A quantitative atlas of mitotic phosphorylation.</title>
        <authorList>
            <person name="Dephoure N."/>
            <person name="Zhou C."/>
            <person name="Villen J."/>
            <person name="Beausoleil S.A."/>
            <person name="Bakalarski C.E."/>
            <person name="Elledge S.J."/>
            <person name="Gygi S.P."/>
        </authorList>
    </citation>
    <scope>IDENTIFICATION BY MASS SPECTROMETRY [LARGE SCALE ANALYSIS]</scope>
    <source>
        <tissue>Cervix carcinoma</tissue>
    </source>
</reference>
<reference key="32">
    <citation type="journal article" date="2009" name="Oncogene">
        <title>The DEAD-box protein p72 regulates ERalpha-/oestrogen-dependent transcription and cell growth, and is associated with improved survival in ERalpha-positive breast cancer.</title>
        <authorList>
            <person name="Wortham N.C."/>
            <person name="Ahamed E."/>
            <person name="Nicol S.M."/>
            <person name="Thomas R.S."/>
            <person name="Periyasamy M."/>
            <person name="Jiang J."/>
            <person name="Ochocka A.M."/>
            <person name="Shousha S."/>
            <person name="Huson L."/>
            <person name="Bray S.E."/>
            <person name="Coombes R.C."/>
            <person name="Ali S."/>
            <person name="Fuller-Pace F.V."/>
        </authorList>
    </citation>
    <scope>FUNCTION</scope>
    <scope>INTERACTION WITH ESR1</scope>
</reference>
<reference key="33">
    <citation type="journal article" date="2009" name="Science">
        <title>Lysine acetylation targets protein complexes and co-regulates major cellular functions.</title>
        <authorList>
            <person name="Choudhary C."/>
            <person name="Kumar C."/>
            <person name="Gnad F."/>
            <person name="Nielsen M.L."/>
            <person name="Rehman M."/>
            <person name="Walther T.C."/>
            <person name="Olsen J.V."/>
            <person name="Mann M."/>
        </authorList>
    </citation>
    <scope>ACETYLATION [LARGE SCALE ANALYSIS] AT LYS-32; LYS-33 AND LYS-40</scope>
    <scope>IDENTIFICATION BY MASS SPECTROMETRY [LARGE SCALE ANALYSIS]</scope>
</reference>
<reference key="34">
    <citation type="journal article" date="2010" name="Biochemistry">
        <title>Sumoylation of p68 and p72 RNA helicases affects protein stability and transactivation potential.</title>
        <authorList>
            <person name="Mooney S.M."/>
            <person name="Grande J.P."/>
            <person name="Salisbury J.L."/>
            <person name="Janknecht R."/>
        </authorList>
    </citation>
    <scope>SUMOYLATION AT LYS-53</scope>
    <scope>MUTAGENESIS OF LYS-53</scope>
    <scope>POLYUBIQUITINATION</scope>
</reference>
<reference key="35">
    <citation type="journal article" date="2010" name="Sci. Signal.">
        <title>Quantitative phosphoproteomics reveals widespread full phosphorylation site occupancy during mitosis.</title>
        <authorList>
            <person name="Olsen J.V."/>
            <person name="Vermeulen M."/>
            <person name="Santamaria A."/>
            <person name="Kumar C."/>
            <person name="Miller M.L."/>
            <person name="Jensen L.J."/>
            <person name="Gnad F."/>
            <person name="Cox J."/>
            <person name="Jensen T.S."/>
            <person name="Nigg E.A."/>
            <person name="Brunak S."/>
            <person name="Mann M."/>
        </authorList>
    </citation>
    <scope>PHOSPHORYLATION [LARGE SCALE ANALYSIS] AT SER-480</scope>
    <scope>IDENTIFICATION BY MASS SPECTROMETRY [LARGE SCALE ANALYSIS]</scope>
    <source>
        <tissue>Cervix carcinoma</tissue>
    </source>
</reference>
<reference key="36">
    <citation type="journal article" date="2011" name="BMC Syst. Biol.">
        <title>Initial characterization of the human central proteome.</title>
        <authorList>
            <person name="Burkard T.R."/>
            <person name="Planyavsky M."/>
            <person name="Kaupe I."/>
            <person name="Breitwieser F.P."/>
            <person name="Buerckstuemmer T."/>
            <person name="Bennett K.L."/>
            <person name="Superti-Furga G."/>
            <person name="Colinge J."/>
        </authorList>
    </citation>
    <scope>IDENTIFICATION BY MASS SPECTROMETRY [LARGE SCALE ANALYSIS]</scope>
</reference>
<reference key="37">
    <citation type="journal article" date="2011" name="Mol. Cell. Biol.">
        <title>RNA helicase p68 (DDX5) regulates tau exon 10 splicing by modulating a stem-loop structure at the 5' splice site.</title>
        <authorList>
            <person name="Kar A."/>
            <person name="Fushimi K."/>
            <person name="Zhou X."/>
            <person name="Ray P."/>
            <person name="Shi C."/>
            <person name="Chen X."/>
            <person name="Liu Z."/>
            <person name="Chen S."/>
            <person name="Wu J.Y."/>
        </authorList>
    </citation>
    <scope>FUNCTION</scope>
    <scope>INTERACTION WITH RBM4</scope>
    <scope>MUTAGENESIS OF ARG-403</scope>
    <scope>RNA-BINDING</scope>
</reference>
<reference key="38">
    <citation type="journal article" date="2011" name="Sci. Signal.">
        <title>System-wide temporal characterization of the proteome and phosphoproteome of human embryonic stem cell differentiation.</title>
        <authorList>
            <person name="Rigbolt K.T."/>
            <person name="Prokhorova T.A."/>
            <person name="Akimov V."/>
            <person name="Henningsen J."/>
            <person name="Johansen P.T."/>
            <person name="Kratchmarova I."/>
            <person name="Kassem M."/>
            <person name="Mann M."/>
            <person name="Olsen J.V."/>
            <person name="Blagoev B."/>
        </authorList>
    </citation>
    <scope>PHOSPHORYLATION [LARGE SCALE ANALYSIS] AT SER-480</scope>
    <scope>IDENTIFICATION BY MASS SPECTROMETRY [LARGE SCALE ANALYSIS]</scope>
</reference>
<reference key="39">
    <citation type="journal article" date="2013" name="J. Proteome Res.">
        <title>Toward a comprehensive characterization of a human cancer cell phosphoproteome.</title>
        <authorList>
            <person name="Zhou H."/>
            <person name="Di Palma S."/>
            <person name="Preisinger C."/>
            <person name="Peng M."/>
            <person name="Polat A.N."/>
            <person name="Heck A.J."/>
            <person name="Mohammed S."/>
        </authorList>
    </citation>
    <scope>PHOSPHORYLATION [LARGE SCALE ANALYSIS] AT SER-24; SER-480 AND SER-520</scope>
    <scope>IDENTIFICATION BY MASS SPECTROMETRY [LARGE SCALE ANALYSIS]</scope>
    <source>
        <tissue>Cervix carcinoma</tissue>
        <tissue>Erythroleukemia</tissue>
    </source>
</reference>
<reference key="40">
    <citation type="journal article" date="2014" name="J. Biol. Chem.">
        <title>Nuclear ARVCF protein binds splicing factors and contributes to the regulation of alternative splicing.</title>
        <authorList>
            <person name="Rappe U."/>
            <person name="Schlechter T."/>
            <person name="Aschoff M."/>
            <person name="Hotz-Wagenblatt A."/>
            <person name="Hofmann I."/>
        </authorList>
    </citation>
    <scope>IDENTIFICATION IN RIBONUCLEOPROTEIN COMPLEX</scope>
    <scope>INTERACTION WITH ARVCF</scope>
    <scope>SUBCELLULAR LOCATION</scope>
</reference>
<reference key="41">
    <citation type="journal article" date="2014" name="Nat. Struct. Mol. Biol.">
        <title>Uncovering global SUMOylation signaling networks in a site-specific manner.</title>
        <authorList>
            <person name="Hendriks I.A."/>
            <person name="D'Souza R.C."/>
            <person name="Yang B."/>
            <person name="Verlaan-de Vries M."/>
            <person name="Mann M."/>
            <person name="Vertegaal A.C."/>
        </authorList>
    </citation>
    <scope>SUMOYLATION [LARGE SCALE ANALYSIS] AT LYS-53</scope>
    <scope>IDENTIFICATION BY MASS SPECTROMETRY [LARGE SCALE ANALYSIS]</scope>
</reference>
<reference key="42">
    <citation type="journal article" date="2014" name="Proc. Natl. Acad. Sci. U.S.A.">
        <title>Mapping of SUMO sites and analysis of SUMOylation changes induced by external stimuli.</title>
        <authorList>
            <person name="Impens F."/>
            <person name="Radoshevich L."/>
            <person name="Cossart P."/>
            <person name="Ribet D."/>
        </authorList>
    </citation>
    <scope>SUMOYLATION [LARGE SCALE ANALYSIS] AT LYS-53</scope>
    <scope>IDENTIFICATION BY MASS SPECTROMETRY [LARGE SCALE ANALYSIS]</scope>
</reference>
<reference key="43">
    <citation type="journal article" date="2015" name="Cell Rep.">
        <title>SUMO-2 orchestrates chromatin modifiers in response to DNA damage.</title>
        <authorList>
            <person name="Hendriks I.A."/>
            <person name="Treffers L.W."/>
            <person name="Verlaan-de Vries M."/>
            <person name="Olsen J.V."/>
            <person name="Vertegaal A.C."/>
        </authorList>
    </citation>
    <scope>SUMOYLATION [LARGE SCALE ANALYSIS] AT LYS-53</scope>
    <scope>IDENTIFICATION BY MASS SPECTROMETRY [LARGE SCALE ANALYSIS]</scope>
</reference>
<reference key="44">
    <citation type="journal article" date="2015" name="Mol. Cell. Proteomics">
        <title>System-wide analysis of SUMOylation dynamics in response to replication stress reveals novel small ubiquitin-like modified target proteins and acceptor lysines relevant for genome stability.</title>
        <authorList>
            <person name="Xiao Z."/>
            <person name="Chang J.G."/>
            <person name="Hendriks I.A."/>
            <person name="Sigurdsson J.O."/>
            <person name="Olsen J.V."/>
            <person name="Vertegaal A.C."/>
        </authorList>
    </citation>
    <scope>SUMOYLATION [LARGE SCALE ANALYSIS] AT LYS-53</scope>
    <scope>IDENTIFICATION BY MASS SPECTROMETRY [LARGE SCALE ANALYSIS]</scope>
</reference>
<reference key="45">
    <citation type="journal article" date="2015" name="PLoS ONE">
        <title>Identification of Novel Proteins Co-Purifying with Cockayne Syndrome Group B (CSB) Reveals Potential Roles for CSB in RNA Metabolism and Chromatin Dynamics.</title>
        <authorList>
            <person name="Nicolai S."/>
            <person name="Filippi S."/>
            <person name="Caputo M."/>
            <person name="Cipak L."/>
            <person name="Gregan J."/>
            <person name="Ammerer G."/>
            <person name="Frontini M."/>
            <person name="Willems D."/>
            <person name="Prantera G."/>
            <person name="Balajee A.S."/>
            <person name="Proietti-De-Santis L."/>
        </authorList>
    </citation>
    <scope>INTERACTION WITH ERCC6</scope>
</reference>
<reference key="46">
    <citation type="journal article" date="2015" name="Proteomics">
        <title>N-terminome analysis of the human mitochondrial proteome.</title>
        <authorList>
            <person name="Vaca Jacome A.S."/>
            <person name="Rabilloud T."/>
            <person name="Schaeffer-Reiss C."/>
            <person name="Rompais M."/>
            <person name="Ayoub D."/>
            <person name="Lane L."/>
            <person name="Bairoch A."/>
            <person name="Van Dorsselaer A."/>
            <person name="Carapito C."/>
        </authorList>
    </citation>
    <scope>IDENTIFICATION BY MASS SPECTROMETRY [LARGE SCALE ANALYSIS]</scope>
</reference>
<reference key="47">
    <citation type="journal article" date="2017" name="Nat. Struct. Mol. Biol.">
        <title>Site-specific mapping of the human SUMO proteome reveals co-modification with phosphorylation.</title>
        <authorList>
            <person name="Hendriks I.A."/>
            <person name="Lyon D."/>
            <person name="Young C."/>
            <person name="Jensen L.J."/>
            <person name="Vertegaal A.C."/>
            <person name="Nielsen M.L."/>
        </authorList>
    </citation>
    <scope>SUMOYLATION [LARGE SCALE ANALYSIS] AT LYS-32; LYS-45; LYS-53; LYS-340; LYS-343; LYS-388; LYS-391; LYS-411; LYS-437; LYS-451; LYS-470 AND LYS-523</scope>
    <scope>IDENTIFICATION BY MASS SPECTROMETRY [LARGE SCALE ANALYSIS]</scope>
</reference>
<reference key="48">
    <citation type="journal article" date="2010" name="PLoS ONE">
        <title>Comparative structural analysis of human DEAD-box RNA helicases.</title>
        <authorList>
            <person name="Schutz P."/>
            <person name="Karlberg T."/>
            <person name="van den Berg S."/>
            <person name="Collins R."/>
            <person name="Lehtio L."/>
            <person name="Hogbom M."/>
            <person name="Holmberg-Schiavone L."/>
            <person name="Tempel W."/>
            <person name="Park H.W."/>
            <person name="Hammarstrom M."/>
            <person name="Moche M."/>
            <person name="Thorsell A.G."/>
            <person name="Schuler H."/>
        </authorList>
    </citation>
    <scope>X-RAY CRYSTALLOGRAPHY (2.6 ANGSTROMS) OF 68-307 IN COMPLEX WITH ADP</scope>
</reference>
<organism>
    <name type="scientific">Homo sapiens</name>
    <name type="common">Human</name>
    <dbReference type="NCBI Taxonomy" id="9606"/>
    <lineage>
        <taxon>Eukaryota</taxon>
        <taxon>Metazoa</taxon>
        <taxon>Chordata</taxon>
        <taxon>Craniata</taxon>
        <taxon>Vertebrata</taxon>
        <taxon>Euteleostomi</taxon>
        <taxon>Mammalia</taxon>
        <taxon>Eutheria</taxon>
        <taxon>Euarchontoglires</taxon>
        <taxon>Primates</taxon>
        <taxon>Haplorrhini</taxon>
        <taxon>Catarrhini</taxon>
        <taxon>Hominidae</taxon>
        <taxon>Homo</taxon>
    </lineage>
</organism>
<gene>
    <name type="primary">DDX5</name>
    <name type="synonym">G17P1</name>
    <name type="synonym">HELR</name>
    <name type="synonym">HLR1</name>
</gene>
<evidence type="ECO:0000250" key="1">
    <source>
        <dbReference type="UniProtKB" id="Q61656"/>
    </source>
</evidence>
<evidence type="ECO:0000255" key="2">
    <source>
        <dbReference type="PROSITE-ProRule" id="PRU00541"/>
    </source>
</evidence>
<evidence type="ECO:0000255" key="3">
    <source>
        <dbReference type="PROSITE-ProRule" id="PRU00542"/>
    </source>
</evidence>
<evidence type="ECO:0000256" key="4">
    <source>
        <dbReference type="SAM" id="MobiDB-lite"/>
    </source>
</evidence>
<evidence type="ECO:0000269" key="5">
    <source>
    </source>
</evidence>
<evidence type="ECO:0000269" key="6">
    <source>
    </source>
</evidence>
<evidence type="ECO:0000269" key="7">
    <source>
    </source>
</evidence>
<evidence type="ECO:0000269" key="8">
    <source>
    </source>
</evidence>
<evidence type="ECO:0000269" key="9">
    <source>
    </source>
</evidence>
<evidence type="ECO:0000269" key="10">
    <source>
    </source>
</evidence>
<evidence type="ECO:0000269" key="11">
    <source>
    </source>
</evidence>
<evidence type="ECO:0000269" key="12">
    <source>
    </source>
</evidence>
<evidence type="ECO:0000269" key="13">
    <source>
    </source>
</evidence>
<evidence type="ECO:0000269" key="14">
    <source>
    </source>
</evidence>
<evidence type="ECO:0000269" key="15">
    <source>
    </source>
</evidence>
<evidence type="ECO:0000269" key="16">
    <source>
    </source>
</evidence>
<evidence type="ECO:0000269" key="17">
    <source>
    </source>
</evidence>
<evidence type="ECO:0000269" key="18">
    <source>
    </source>
</evidence>
<evidence type="ECO:0000269" key="19">
    <source>
    </source>
</evidence>
<evidence type="ECO:0000269" key="20">
    <source>
    </source>
</evidence>
<evidence type="ECO:0000269" key="21">
    <source>
    </source>
</evidence>
<evidence type="ECO:0000269" key="22">
    <source>
    </source>
</evidence>
<evidence type="ECO:0000269" key="23">
    <source>
    </source>
</evidence>
<evidence type="ECO:0000269" key="24">
    <source>
    </source>
</evidence>
<evidence type="ECO:0000303" key="25">
    <source>
    </source>
</evidence>
<evidence type="ECO:0000305" key="26"/>
<evidence type="ECO:0000305" key="27">
    <source>
    </source>
</evidence>
<evidence type="ECO:0000305" key="28">
    <source>
    </source>
</evidence>
<evidence type="ECO:0000305" key="29">
    <source>
    </source>
</evidence>
<evidence type="ECO:0000305" key="30">
    <source>
    </source>
</evidence>
<evidence type="ECO:0007744" key="31">
    <source>
    </source>
</evidence>
<evidence type="ECO:0007744" key="32">
    <source>
    </source>
</evidence>
<evidence type="ECO:0007744" key="33">
    <source>
    </source>
</evidence>
<evidence type="ECO:0007744" key="34">
    <source>
    </source>
</evidence>
<evidence type="ECO:0007744" key="35">
    <source>
    </source>
</evidence>
<evidence type="ECO:0007744" key="36">
    <source>
    </source>
</evidence>
<evidence type="ECO:0007744" key="37">
    <source>
    </source>
</evidence>
<evidence type="ECO:0007744" key="38">
    <source>
    </source>
</evidence>
<evidence type="ECO:0007744" key="39">
    <source>
    </source>
</evidence>
<evidence type="ECO:0007744" key="40">
    <source>
    </source>
</evidence>
<evidence type="ECO:0007829" key="41">
    <source>
        <dbReference type="PDB" id="3FE2"/>
    </source>
</evidence>
<evidence type="ECO:0007829" key="42">
    <source>
        <dbReference type="PDB" id="4A4D"/>
    </source>
</evidence>
<keyword id="KW-0002">3D-structure</keyword>
<keyword id="KW-0007">Acetylation</keyword>
<keyword id="KW-0025">Alternative splicing</keyword>
<keyword id="KW-0067">ATP-binding</keyword>
<keyword id="KW-0090">Biological rhythms</keyword>
<keyword id="KW-0963">Cytoplasm</keyword>
<keyword id="KW-0347">Helicase</keyword>
<keyword id="KW-0378">Hydrolase</keyword>
<keyword id="KW-1017">Isopeptide bond</keyword>
<keyword id="KW-0507">mRNA processing</keyword>
<keyword id="KW-0508">mRNA splicing</keyword>
<keyword id="KW-0547">Nucleotide-binding</keyword>
<keyword id="KW-0539">Nucleus</keyword>
<keyword id="KW-0597">Phosphoprotein</keyword>
<keyword id="KW-1267">Proteomics identification</keyword>
<keyword id="KW-1185">Reference proteome</keyword>
<keyword id="KW-0694">RNA-binding</keyword>
<keyword id="KW-0747">Spliceosome</keyword>
<keyword id="KW-0804">Transcription</keyword>
<keyword id="KW-0805">Transcription regulation</keyword>
<keyword id="KW-0832">Ubl conjugation</keyword>
<sequence length="614" mass="69148">MSGYSSDRDRGRDRGFGAPRFGGSRAGPLSGKKFGNPGEKLVKKKWNLDELPKFEKNFYQEHPDLARRTAQEVETYRRSKEITVRGHNCPKPVLNFYEANFPANVMDVIARQNFTEPTAIQAQGWPVALSGLDMVGVAQTGSGKTLSYLLPAIVHINHQPFLERGDGPICLVLAPTRELAQQVQQVAAEYCRACRLKSTCIYGGAPKGPQIRDLERGVEICIATPGRLIDFLECGKTNLRRTTYLVLDEADRMLDMGFEPQIRKIVDQIRPDRQTLMWSATWPKEVRQLAEDFLKDYIHINIGALELSANHNILQIVDVCHDVEKDEKLIRLMEEIMSEKENKTIVFVETKRRCDELTRKMRRDGWPAMGIHGDKSQQERDWVLNEFKHGKAPILIATDVASRGLDVEDVKFVINYDYPNSSEDYIHRIGRTARSTKTGTAYTFFTPNNIKQVSDLISVLREANQAINPKLLQLVEDRGSGRSRGRGGMKDDRRDRYSAGKRGGFNTFRDRENYDRGYSSLLKRDFGAKTQNGVYSAANYTNGSFGSNFVSAGIQTSFRTGNPTGTYQNGYDSTQQYGSNVPNMHNGMNQQAYAYPATAAAPMIGYPMPTGYSQ</sequence>
<accession>P17844</accession>
<accession>B4DLW8</accession>
<accession>B5BU21</accession>
<accession>D3DU32</accession>
<accession>E7ETL9</accession>
<accession>O75681</accession>
<accession>Q53Y61</accession>
<name>DDX5_HUMAN</name>
<dbReference type="EC" id="3.6.4.13"/>
<dbReference type="EMBL" id="X52104">
    <property type="protein sequence ID" value="CAA36324.1"/>
    <property type="molecule type" value="mRNA"/>
</dbReference>
<dbReference type="EMBL" id="AF015812">
    <property type="protein sequence ID" value="AAB84094.1"/>
    <property type="molecule type" value="Genomic_DNA"/>
</dbReference>
<dbReference type="EMBL" id="BT006943">
    <property type="protein sequence ID" value="AAP35589.1"/>
    <property type="molecule type" value="mRNA"/>
</dbReference>
<dbReference type="EMBL" id="AK297192">
    <property type="protein sequence ID" value="BAG59680.1"/>
    <property type="molecule type" value="mRNA"/>
</dbReference>
<dbReference type="EMBL" id="AB451257">
    <property type="protein sequence ID" value="BAG70071.1"/>
    <property type="molecule type" value="mRNA"/>
</dbReference>
<dbReference type="EMBL" id="AC009994">
    <property type="status" value="NOT_ANNOTATED_CDS"/>
    <property type="molecule type" value="Genomic_DNA"/>
</dbReference>
<dbReference type="EMBL" id="CH471109">
    <property type="protein sequence ID" value="EAW94202.1"/>
    <property type="molecule type" value="Genomic_DNA"/>
</dbReference>
<dbReference type="EMBL" id="CH471109">
    <property type="protein sequence ID" value="EAW94203.1"/>
    <property type="molecule type" value="Genomic_DNA"/>
</dbReference>
<dbReference type="EMBL" id="BC016027">
    <property type="protein sequence ID" value="AAH16027.1"/>
    <property type="molecule type" value="mRNA"/>
</dbReference>
<dbReference type="EMBL" id="X15729">
    <property type="protein sequence ID" value="CAA33751.1"/>
    <property type="molecule type" value="mRNA"/>
</dbReference>
<dbReference type="EMBL" id="AJ010931">
    <property type="protein sequence ID" value="CAA09408.1"/>
    <property type="molecule type" value="Genomic_DNA"/>
</dbReference>
<dbReference type="CCDS" id="CCDS11659.1">
    <molecule id="P17844-1"/>
</dbReference>
<dbReference type="PIR" id="JC1087">
    <property type="entry name" value="JC1087"/>
</dbReference>
<dbReference type="RefSeq" id="NP_001307524.1">
    <molecule id="P17844-1"/>
    <property type="nucleotide sequence ID" value="NM_001320595.2"/>
</dbReference>
<dbReference type="RefSeq" id="NP_001307525.1">
    <molecule id="P17844-1"/>
    <property type="nucleotide sequence ID" value="NM_001320596.3"/>
</dbReference>
<dbReference type="RefSeq" id="NP_004387.1">
    <molecule id="P17844-1"/>
    <property type="nucleotide sequence ID" value="NM_004396.5"/>
</dbReference>
<dbReference type="PDB" id="3FE2">
    <property type="method" value="X-ray"/>
    <property type="resolution" value="2.60 A"/>
    <property type="chains" value="A/B=68-307"/>
</dbReference>
<dbReference type="PDB" id="4A4D">
    <property type="method" value="X-ray"/>
    <property type="resolution" value="2.70 A"/>
    <property type="chains" value="A=52-304"/>
</dbReference>
<dbReference type="PDBsum" id="3FE2"/>
<dbReference type="PDBsum" id="4A4D"/>
<dbReference type="SMR" id="P17844"/>
<dbReference type="BioGRID" id="108021">
    <property type="interactions" value="550"/>
</dbReference>
<dbReference type="CORUM" id="P17844"/>
<dbReference type="DIP" id="DIP-29844N"/>
<dbReference type="FunCoup" id="P17844">
    <property type="interactions" value="3290"/>
</dbReference>
<dbReference type="IntAct" id="P17844">
    <property type="interactions" value="234"/>
</dbReference>
<dbReference type="MINT" id="P17844"/>
<dbReference type="STRING" id="9606.ENSP00000225792"/>
<dbReference type="BindingDB" id="P17844"/>
<dbReference type="ChEMBL" id="CHEMBL4295722"/>
<dbReference type="DrugBank" id="DB11638">
    <property type="generic name" value="Artenimol"/>
</dbReference>
<dbReference type="DrugBank" id="DB19010">
    <property type="generic name" value="Supinoxin"/>
</dbReference>
<dbReference type="GlyCosmos" id="P17844">
    <property type="glycosylation" value="4 sites, 2 glycans"/>
</dbReference>
<dbReference type="GlyGen" id="P17844">
    <property type="glycosylation" value="6 sites, 1 N-linked glycan (1 site), 2 O-linked glycans (5 sites)"/>
</dbReference>
<dbReference type="iPTMnet" id="P17844"/>
<dbReference type="MetOSite" id="P17844"/>
<dbReference type="PhosphoSitePlus" id="P17844"/>
<dbReference type="SwissPalm" id="P17844"/>
<dbReference type="BioMuta" id="DDX5"/>
<dbReference type="DMDM" id="129383"/>
<dbReference type="jPOST" id="P17844"/>
<dbReference type="MassIVE" id="P17844"/>
<dbReference type="PaxDb" id="9606-ENSP00000225792"/>
<dbReference type="PeptideAtlas" id="P17844"/>
<dbReference type="ProteomicsDB" id="18237"/>
<dbReference type="ProteomicsDB" id="53519">
    <molecule id="P17844-1"/>
</dbReference>
<dbReference type="Pumba" id="P17844"/>
<dbReference type="Antibodypedia" id="3130">
    <property type="antibodies" value="505 antibodies from 41 providers"/>
</dbReference>
<dbReference type="DNASU" id="1655"/>
<dbReference type="Ensembl" id="ENST00000225792.10">
    <molecule id="P17844-1"/>
    <property type="protein sequence ID" value="ENSP00000225792.5"/>
    <property type="gene ID" value="ENSG00000108654.16"/>
</dbReference>
<dbReference type="Ensembl" id="ENST00000450599.7">
    <molecule id="P17844-1"/>
    <property type="protein sequence ID" value="ENSP00000403085.3"/>
    <property type="gene ID" value="ENSG00000108654.16"/>
</dbReference>
<dbReference type="Ensembl" id="ENST00000577922.6">
    <molecule id="P17844-1"/>
    <property type="protein sequence ID" value="ENSP00000464337.2"/>
    <property type="gene ID" value="ENSG00000108654.16"/>
</dbReference>
<dbReference type="Ensembl" id="ENST00000585111.2">
    <molecule id="P17844-1"/>
    <property type="protein sequence ID" value="ENSP00000463168.2"/>
    <property type="gene ID" value="ENSG00000108654.16"/>
</dbReference>
<dbReference type="Ensembl" id="ENST00000676785.1">
    <molecule id="P17844-1"/>
    <property type="protein sequence ID" value="ENSP00000504794.1"/>
    <property type="gene ID" value="ENSG00000108654.16"/>
</dbReference>
<dbReference type="GeneID" id="1655"/>
<dbReference type="KEGG" id="hsa:1655"/>
<dbReference type="MANE-Select" id="ENST00000225792.10">
    <property type="protein sequence ID" value="ENSP00000225792.5"/>
    <property type="RefSeq nucleotide sequence ID" value="NM_004396.5"/>
    <property type="RefSeq protein sequence ID" value="NP_004387.1"/>
</dbReference>
<dbReference type="UCSC" id="uc002jek.3">
    <molecule id="P17844-1"/>
    <property type="organism name" value="human"/>
</dbReference>
<dbReference type="AGR" id="HGNC:2746"/>
<dbReference type="CTD" id="1655"/>
<dbReference type="DisGeNET" id="1655"/>
<dbReference type="GeneCards" id="DDX5"/>
<dbReference type="HGNC" id="HGNC:2746">
    <property type="gene designation" value="DDX5"/>
</dbReference>
<dbReference type="HPA" id="ENSG00000108654">
    <property type="expression patterns" value="Low tissue specificity"/>
</dbReference>
<dbReference type="MIM" id="180630">
    <property type="type" value="gene"/>
</dbReference>
<dbReference type="neXtProt" id="NX_P17844"/>
<dbReference type="OpenTargets" id="ENSG00000108654"/>
<dbReference type="PharmGKB" id="PA27228"/>
<dbReference type="VEuPathDB" id="HostDB:ENSG00000108654"/>
<dbReference type="eggNOG" id="KOG0331">
    <property type="taxonomic scope" value="Eukaryota"/>
</dbReference>
<dbReference type="GeneTree" id="ENSGT00940000154705"/>
<dbReference type="HOGENOM" id="CLU_003041_16_4_1"/>
<dbReference type="InParanoid" id="P17844"/>
<dbReference type="OrthoDB" id="196131at2759"/>
<dbReference type="PAN-GO" id="P17844">
    <property type="GO annotations" value="4 GO annotations based on evolutionary models"/>
</dbReference>
<dbReference type="PhylomeDB" id="P17844"/>
<dbReference type="TreeFam" id="TF300332"/>
<dbReference type="BRENDA" id="3.6.4.13">
    <property type="organism ID" value="2681"/>
</dbReference>
<dbReference type="PathwayCommons" id="P17844"/>
<dbReference type="Reactome" id="R-HSA-3899300">
    <property type="pathway name" value="SUMOylation of transcription cofactors"/>
</dbReference>
<dbReference type="Reactome" id="R-HSA-72163">
    <property type="pathway name" value="mRNA Splicing - Major Pathway"/>
</dbReference>
<dbReference type="Reactome" id="R-HSA-9018519">
    <property type="pathway name" value="Estrogen-dependent gene expression"/>
</dbReference>
<dbReference type="Reactome" id="R-HSA-9682706">
    <property type="pathway name" value="Replication of the SARS-CoV-1 genome"/>
</dbReference>
<dbReference type="Reactome" id="R-HSA-9694686">
    <property type="pathway name" value="Replication of the SARS-CoV-2 genome"/>
</dbReference>
<dbReference type="SignaLink" id="P17844"/>
<dbReference type="SIGNOR" id="P17844"/>
<dbReference type="BioGRID-ORCS" id="1655">
    <property type="hits" value="504 hits in 1166 CRISPR screens"/>
</dbReference>
<dbReference type="CD-CODE" id="91857CE7">
    <property type="entry name" value="Nucleolus"/>
</dbReference>
<dbReference type="CD-CODE" id="C4E5D2FC">
    <property type="entry name" value="Synthetic Condensate 000367"/>
</dbReference>
<dbReference type="CD-CODE" id="DEE660B4">
    <property type="entry name" value="Stress granule"/>
</dbReference>
<dbReference type="ChiTaRS" id="DDX5">
    <property type="organism name" value="human"/>
</dbReference>
<dbReference type="EvolutionaryTrace" id="P17844"/>
<dbReference type="GeneWiki" id="DDX5"/>
<dbReference type="GenomeRNAi" id="1655"/>
<dbReference type="Pharos" id="P17844">
    <property type="development level" value="Tbio"/>
</dbReference>
<dbReference type="PRO" id="PR:P17844"/>
<dbReference type="Proteomes" id="UP000005640">
    <property type="component" value="Chromosome 17"/>
</dbReference>
<dbReference type="RNAct" id="P17844">
    <property type="molecule type" value="protein"/>
</dbReference>
<dbReference type="Bgee" id="ENSG00000108654">
    <property type="expression patterns" value="Expressed in calcaneal tendon and 191 other cell types or tissues"/>
</dbReference>
<dbReference type="ExpressionAtlas" id="P17844">
    <property type="expression patterns" value="baseline and differential"/>
</dbReference>
<dbReference type="GO" id="GO:0071013">
    <property type="term" value="C:catalytic step 2 spliceosome"/>
    <property type="evidence" value="ECO:0000314"/>
    <property type="project" value="UniProtKB"/>
</dbReference>
<dbReference type="GO" id="GO:0005737">
    <property type="term" value="C:cytoplasm"/>
    <property type="evidence" value="ECO:0000318"/>
    <property type="project" value="GO_Central"/>
</dbReference>
<dbReference type="GO" id="GO:0005829">
    <property type="term" value="C:cytosol"/>
    <property type="evidence" value="ECO:0000304"/>
    <property type="project" value="Reactome"/>
</dbReference>
<dbReference type="GO" id="GO:0070062">
    <property type="term" value="C:extracellular exosome"/>
    <property type="evidence" value="ECO:0007005"/>
    <property type="project" value="UniProtKB"/>
</dbReference>
<dbReference type="GO" id="GO:0016020">
    <property type="term" value="C:membrane"/>
    <property type="evidence" value="ECO:0007005"/>
    <property type="project" value="UniProtKB"/>
</dbReference>
<dbReference type="GO" id="GO:0016607">
    <property type="term" value="C:nuclear speck"/>
    <property type="evidence" value="ECO:0000314"/>
    <property type="project" value="UniProtKB"/>
</dbReference>
<dbReference type="GO" id="GO:0005730">
    <property type="term" value="C:nucleolus"/>
    <property type="evidence" value="ECO:0000314"/>
    <property type="project" value="HPA"/>
</dbReference>
<dbReference type="GO" id="GO:0005654">
    <property type="term" value="C:nucleoplasm"/>
    <property type="evidence" value="ECO:0000314"/>
    <property type="project" value="HPA"/>
</dbReference>
<dbReference type="GO" id="GO:0005634">
    <property type="term" value="C:nucleus"/>
    <property type="evidence" value="ECO:0000314"/>
    <property type="project" value="UniProtKB"/>
</dbReference>
<dbReference type="GO" id="GO:1990904">
    <property type="term" value="C:ribonucleoprotein complex"/>
    <property type="evidence" value="ECO:0000314"/>
    <property type="project" value="MGI"/>
</dbReference>
<dbReference type="GO" id="GO:0005524">
    <property type="term" value="F:ATP binding"/>
    <property type="evidence" value="ECO:0007669"/>
    <property type="project" value="UniProtKB-KW"/>
</dbReference>
<dbReference type="GO" id="GO:0016887">
    <property type="term" value="F:ATP hydrolysis activity"/>
    <property type="evidence" value="ECO:0007669"/>
    <property type="project" value="RHEA"/>
</dbReference>
<dbReference type="GO" id="GO:0048306">
    <property type="term" value="F:calcium-dependent protein binding"/>
    <property type="evidence" value="ECO:0007669"/>
    <property type="project" value="Ensembl"/>
</dbReference>
<dbReference type="GO" id="GO:0005516">
    <property type="term" value="F:calmodulin binding"/>
    <property type="evidence" value="ECO:0007669"/>
    <property type="project" value="Ensembl"/>
</dbReference>
<dbReference type="GO" id="GO:0019899">
    <property type="term" value="F:enzyme binding"/>
    <property type="evidence" value="ECO:0007669"/>
    <property type="project" value="Ensembl"/>
</dbReference>
<dbReference type="GO" id="GO:0035500">
    <property type="term" value="F:MH2 domain binding"/>
    <property type="evidence" value="ECO:0000353"/>
    <property type="project" value="BHF-UCL"/>
</dbReference>
<dbReference type="GO" id="GO:0003730">
    <property type="term" value="F:mRNA 3'-UTR binding"/>
    <property type="evidence" value="ECO:0000314"/>
    <property type="project" value="UniProtKB"/>
</dbReference>
<dbReference type="GO" id="GO:0003729">
    <property type="term" value="F:mRNA binding"/>
    <property type="evidence" value="ECO:0000318"/>
    <property type="project" value="GO_Central"/>
</dbReference>
<dbReference type="GO" id="GO:0050681">
    <property type="term" value="F:nuclear androgen receptor binding"/>
    <property type="evidence" value="ECO:0000314"/>
    <property type="project" value="UniProtKB"/>
</dbReference>
<dbReference type="GO" id="GO:0036002">
    <property type="term" value="F:pre-mRNA binding"/>
    <property type="evidence" value="ECO:0000314"/>
    <property type="project" value="UniProtKB"/>
</dbReference>
<dbReference type="GO" id="GO:0070878">
    <property type="term" value="F:primary miRNA binding"/>
    <property type="evidence" value="ECO:0000314"/>
    <property type="project" value="BHF-UCL"/>
</dbReference>
<dbReference type="GO" id="GO:1990841">
    <property type="term" value="F:promoter-specific chromatin binding"/>
    <property type="evidence" value="ECO:0000250"/>
    <property type="project" value="UniProtKB"/>
</dbReference>
<dbReference type="GO" id="GO:0070412">
    <property type="term" value="F:R-SMAD binding"/>
    <property type="evidence" value="ECO:0000353"/>
    <property type="project" value="BHF-UCL"/>
</dbReference>
<dbReference type="GO" id="GO:0043021">
    <property type="term" value="F:ribonucleoprotein complex binding"/>
    <property type="evidence" value="ECO:0000314"/>
    <property type="project" value="UniProtKB"/>
</dbReference>
<dbReference type="GO" id="GO:0003723">
    <property type="term" value="F:RNA binding"/>
    <property type="evidence" value="ECO:0007005"/>
    <property type="project" value="UniProtKB"/>
</dbReference>
<dbReference type="GO" id="GO:0003724">
    <property type="term" value="F:RNA helicase activity"/>
    <property type="evidence" value="ECO:0000315"/>
    <property type="project" value="UniProtKB"/>
</dbReference>
<dbReference type="GO" id="GO:0046332">
    <property type="term" value="F:SMAD binding"/>
    <property type="evidence" value="ECO:0000353"/>
    <property type="project" value="BHF-UCL"/>
</dbReference>
<dbReference type="GO" id="GO:0000380">
    <property type="term" value="P:alternative mRNA splicing, via spliceosome"/>
    <property type="evidence" value="ECO:0000315"/>
    <property type="project" value="UniProtKB"/>
</dbReference>
<dbReference type="GO" id="GO:0030521">
    <property type="term" value="P:androgen receptor signaling pathway"/>
    <property type="evidence" value="ECO:0000315"/>
    <property type="project" value="UniProtKB"/>
</dbReference>
<dbReference type="GO" id="GO:0030509">
    <property type="term" value="P:BMP signaling pathway"/>
    <property type="evidence" value="ECO:0000315"/>
    <property type="project" value="BHF-UCL"/>
</dbReference>
<dbReference type="GO" id="GO:0001837">
    <property type="term" value="P:epithelial to mesenchymal transition"/>
    <property type="evidence" value="ECO:0000315"/>
    <property type="project" value="UniProtKB"/>
</dbReference>
<dbReference type="GO" id="GO:0030520">
    <property type="term" value="P:estrogen receptor signaling pathway"/>
    <property type="evidence" value="ECO:0000315"/>
    <property type="project" value="UniProtKB"/>
</dbReference>
<dbReference type="GO" id="GO:0072332">
    <property type="term" value="P:intrinsic apoptotic signaling pathway by p53 class mediator"/>
    <property type="evidence" value="ECO:0000315"/>
    <property type="project" value="UniProtKB"/>
</dbReference>
<dbReference type="GO" id="GO:0061614">
    <property type="term" value="P:miRNA transcription"/>
    <property type="evidence" value="ECO:0000250"/>
    <property type="project" value="UniProtKB"/>
</dbReference>
<dbReference type="GO" id="GO:0000398">
    <property type="term" value="P:mRNA splicing, via spliceosome"/>
    <property type="evidence" value="ECO:0000305"/>
    <property type="project" value="UniProtKB"/>
</dbReference>
<dbReference type="GO" id="GO:0009299">
    <property type="term" value="P:mRNA transcription"/>
    <property type="evidence" value="ECO:0000315"/>
    <property type="project" value="CACAO"/>
</dbReference>
<dbReference type="GO" id="GO:0045445">
    <property type="term" value="P:myoblast differentiation"/>
    <property type="evidence" value="ECO:0000250"/>
    <property type="project" value="UniProtKB"/>
</dbReference>
<dbReference type="GO" id="GO:0000122">
    <property type="term" value="P:negative regulation of transcription by RNA polymerase II"/>
    <property type="evidence" value="ECO:0000314"/>
    <property type="project" value="UniProtKB"/>
</dbReference>
<dbReference type="GO" id="GO:0000956">
    <property type="term" value="P:nuclear-transcribed mRNA catabolic process"/>
    <property type="evidence" value="ECO:0000314"/>
    <property type="project" value="UniProtKB"/>
</dbReference>
<dbReference type="GO" id="GO:0043517">
    <property type="term" value="P:positive regulation of DNA damage response, signal transduction by p53 class mediator"/>
    <property type="evidence" value="ECO:0000315"/>
    <property type="project" value="UniProtKB"/>
</dbReference>
<dbReference type="GO" id="GO:0031053">
    <property type="term" value="P:primary miRNA processing"/>
    <property type="evidence" value="ECO:0000315"/>
    <property type="project" value="BHF-UCL"/>
</dbReference>
<dbReference type="GO" id="GO:0000381">
    <property type="term" value="P:regulation of alternative mRNA splicing, via spliceosome"/>
    <property type="evidence" value="ECO:0000314"/>
    <property type="project" value="UniProtKB"/>
</dbReference>
<dbReference type="GO" id="GO:0060765">
    <property type="term" value="P:regulation of androgen receptor signaling pathway"/>
    <property type="evidence" value="ECO:0000315"/>
    <property type="project" value="UniProtKB"/>
</dbReference>
<dbReference type="GO" id="GO:0045667">
    <property type="term" value="P:regulation of osteoblast differentiation"/>
    <property type="evidence" value="ECO:0000250"/>
    <property type="project" value="UniProtKB"/>
</dbReference>
<dbReference type="GO" id="GO:2001014">
    <property type="term" value="P:regulation of skeletal muscle cell differentiation"/>
    <property type="evidence" value="ECO:0000250"/>
    <property type="project" value="UniProtKB"/>
</dbReference>
<dbReference type="GO" id="GO:0006357">
    <property type="term" value="P:regulation of transcription by RNA polymerase II"/>
    <property type="evidence" value="ECO:0000315"/>
    <property type="project" value="UniProtKB"/>
</dbReference>
<dbReference type="GO" id="GO:0045069">
    <property type="term" value="P:regulation of viral genome replication"/>
    <property type="evidence" value="ECO:0007669"/>
    <property type="project" value="Ensembl"/>
</dbReference>
<dbReference type="GO" id="GO:0048511">
    <property type="term" value="P:rhythmic process"/>
    <property type="evidence" value="ECO:0007669"/>
    <property type="project" value="UniProtKB-KW"/>
</dbReference>
<dbReference type="CDD" id="cd18049">
    <property type="entry name" value="DEADc_DDX5"/>
    <property type="match status" value="1"/>
</dbReference>
<dbReference type="CDD" id="cd18787">
    <property type="entry name" value="SF2_C_DEAD"/>
    <property type="match status" value="1"/>
</dbReference>
<dbReference type="FunFam" id="3.40.50.300:FF:000008">
    <property type="entry name" value="ATP-dependent RNA helicase RhlB"/>
    <property type="match status" value="1"/>
</dbReference>
<dbReference type="FunFam" id="3.40.50.300:FF:000079">
    <property type="entry name" value="probable ATP-dependent RNA helicase DDX17"/>
    <property type="match status" value="1"/>
</dbReference>
<dbReference type="Gene3D" id="3.40.50.300">
    <property type="entry name" value="P-loop containing nucleotide triphosphate hydrolases"/>
    <property type="match status" value="2"/>
</dbReference>
<dbReference type="InterPro" id="IPR011545">
    <property type="entry name" value="DEAD/DEAH_box_helicase_dom"/>
</dbReference>
<dbReference type="InterPro" id="IPR014001">
    <property type="entry name" value="Helicase_ATP-bd"/>
</dbReference>
<dbReference type="InterPro" id="IPR001650">
    <property type="entry name" value="Helicase_C-like"/>
</dbReference>
<dbReference type="InterPro" id="IPR027417">
    <property type="entry name" value="P-loop_NTPase"/>
</dbReference>
<dbReference type="InterPro" id="IPR012587">
    <property type="entry name" value="P68_rpt"/>
</dbReference>
<dbReference type="InterPro" id="IPR000629">
    <property type="entry name" value="RNA-helicase_DEAD-box_CS"/>
</dbReference>
<dbReference type="InterPro" id="IPR014014">
    <property type="entry name" value="RNA_helicase_DEAD_Q_motif"/>
</dbReference>
<dbReference type="PANTHER" id="PTHR47958">
    <property type="entry name" value="ATP-DEPENDENT RNA HELICASE DBP3"/>
    <property type="match status" value="1"/>
</dbReference>
<dbReference type="Pfam" id="PF00270">
    <property type="entry name" value="DEAD"/>
    <property type="match status" value="1"/>
</dbReference>
<dbReference type="Pfam" id="PF00271">
    <property type="entry name" value="Helicase_C"/>
    <property type="match status" value="1"/>
</dbReference>
<dbReference type="Pfam" id="PF08061">
    <property type="entry name" value="P68HR"/>
    <property type="match status" value="2"/>
</dbReference>
<dbReference type="SMART" id="SM00487">
    <property type="entry name" value="DEXDc"/>
    <property type="match status" value="1"/>
</dbReference>
<dbReference type="SMART" id="SM00490">
    <property type="entry name" value="HELICc"/>
    <property type="match status" value="1"/>
</dbReference>
<dbReference type="SMART" id="SM01414">
    <property type="entry name" value="P68HR"/>
    <property type="match status" value="2"/>
</dbReference>
<dbReference type="SUPFAM" id="SSF52540">
    <property type="entry name" value="P-loop containing nucleoside triphosphate hydrolases"/>
    <property type="match status" value="1"/>
</dbReference>
<dbReference type="PROSITE" id="PS00039">
    <property type="entry name" value="DEAD_ATP_HELICASE"/>
    <property type="match status" value="1"/>
</dbReference>
<dbReference type="PROSITE" id="PS51192">
    <property type="entry name" value="HELICASE_ATP_BIND_1"/>
    <property type="match status" value="1"/>
</dbReference>
<dbReference type="PROSITE" id="PS51194">
    <property type="entry name" value="HELICASE_CTER"/>
    <property type="match status" value="1"/>
</dbReference>
<dbReference type="PROSITE" id="PS51195">
    <property type="entry name" value="Q_MOTIF"/>
    <property type="match status" value="1"/>
</dbReference>
<protein>
    <recommendedName>
        <fullName>Probable ATP-dependent RNA helicase DDX5</fullName>
        <ecNumber>3.6.4.13</ecNumber>
    </recommendedName>
    <alternativeName>
        <fullName>DEAD box protein 5</fullName>
    </alternativeName>
    <alternativeName>
        <fullName>RNA helicase p68</fullName>
    </alternativeName>
</protein>
<comment type="function">
    <text evidence="7 9 10 11 14 16 17 21">Involved in the alternative regulation of pre-mRNA splicing; its RNA helicase activity is necessary for increasing tau exon 10 inclusion and occurs in a RBM4-dependent manner. Binds to the tau pre-mRNA in the stem-loop region downstream of exon 10. The rate of ATP hydrolysis is highly stimulated by single-stranded RNA. Involved in transcriptional regulation; the function is independent of the RNA helicase activity. Transcriptional coactivator for androgen receptor AR but probably not ESR1. Synergizes with DDX17 and SRA1 RNA to activate MYOD1 transcriptional activity and involved in skeletal muscle differentiation. Transcriptional coactivator for p53/TP53 and involved in p53/TP53 transcriptional response to DNA damage and p53/TP53-dependent apoptosis. Transcriptional coactivator for RUNX2 and involved in regulation of osteoblast differentiation. Acts as a transcriptional repressor in a promoter-specific manner; the function probably involves association with histone deacetylases, such as HDAC1. As component of a large PER complex is involved in the inhibition of 3' transcriptional termination of circadian target genes such as PER1 and NR1D1 and the control of the circadian rhythms.</text>
</comment>
<comment type="catalytic activity">
    <reaction>
        <text>ATP + H2O = ADP + phosphate + H(+)</text>
        <dbReference type="Rhea" id="RHEA:13065"/>
        <dbReference type="ChEBI" id="CHEBI:15377"/>
        <dbReference type="ChEBI" id="CHEBI:15378"/>
        <dbReference type="ChEBI" id="CHEBI:30616"/>
        <dbReference type="ChEBI" id="CHEBI:43474"/>
        <dbReference type="ChEBI" id="CHEBI:456216"/>
        <dbReference type="EC" id="3.6.4.13"/>
    </reaction>
</comment>
<comment type="subunit">
    <text evidence="1 5 6 7 8 9 10 11 12 13 14 15 16 17 20 21 22 23 24">Identified in the spliceosome C complex (PubMed:11991638). Component of a ribonucleoprotein complex containing mRNAs and RNA-binding proteins including DDX5, HNRNPH2 and SRSF1 as well as splicing regulator ARVCF (PubMed:24644279). Interacts with RBM4; the interaction occurs in an RNA-independent manner. Interacts with AGO1 and AGO2. Interacts with ESR1, AR, EP300, CREBBP, POLR2A, TP53, RUNX2 and HDAC1. Self-associates. Interacts with DDX17. Interacts with BRDT. The large PER complex involved in the repression of transcriptional termination is composed of at least PER2, CDK9, DDX5, DHX9, NCBP1 and POLR2A (active). Interacts with DHX36; this interaction occurs in a RNA-dependent manner (PubMed:18279852). Interacts with NUPR1 (By similarity). Interacts with ERCC6 (PubMed:26030138). Interacts with DDX3X in the cytoplasm; this interaction may be more efficient when both proteins are unphosphorylated (PubMed:22034099).</text>
</comment>
<comment type="interaction">
    <interactant intactId="EBI-351962">
        <id>P17844</id>
    </interactant>
    <interactant intactId="EBI-523590">
        <id>Q12873</id>
        <label>CHD3</label>
    </interactant>
    <organismsDiffer>false</organismsDiffer>
    <experiments>4</experiments>
</comment>
<comment type="interaction">
    <interactant intactId="EBI-351962">
        <id>P17844</id>
    </interactant>
    <interactant intactId="EBI-746012">
        <id>Q92841</id>
        <label>DDX17</label>
    </interactant>
    <organismsDiffer>false</organismsDiffer>
    <experiments>5</experiments>
</comment>
<comment type="interaction">
    <interactant intactId="EBI-351962">
        <id>P17844</id>
    </interactant>
    <interactant intactId="EBI-528367">
        <id>Q9NRR4</id>
        <label>DROSHA</label>
    </interactant>
    <organismsDiffer>false</organismsDiffer>
    <experiments>6</experiments>
</comment>
<comment type="interaction">
    <interactant intactId="EBI-351962">
        <id>P17844</id>
    </interactant>
    <interactant intactId="EBI-447295">
        <id>Q09472</id>
        <label>EP300</label>
    </interactant>
    <organismsDiffer>false</organismsDiffer>
    <experiments>4</experiments>
</comment>
<comment type="interaction">
    <interactant intactId="EBI-351962">
        <id>P17844</id>
    </interactant>
    <interactant intactId="EBI-358236">
        <id>Q01780</id>
        <label>EXOSC10</label>
    </interactant>
    <organismsDiffer>false</organismsDiffer>
    <experiments>3</experiments>
</comment>
<comment type="interaction">
    <interactant intactId="EBI-351962">
        <id>P17844</id>
    </interactant>
    <interactant intactId="EBI-358318">
        <id>P22087</id>
        <label>FBL</label>
    </interactant>
    <organismsDiffer>false</organismsDiffer>
    <experiments>6</experiments>
</comment>
<comment type="interaction">
    <interactant intactId="EBI-351962">
        <id>P17844</id>
    </interactant>
    <interactant intactId="EBI-301834">
        <id>Q13547</id>
        <label>HDAC1</label>
    </interactant>
    <organismsDiffer>false</organismsDiffer>
    <experiments>4</experiments>
</comment>
<comment type="interaction">
    <interactant intactId="EBI-351962">
        <id>P17844</id>
    </interactant>
    <interactant intactId="EBI-748752">
        <id>Q9UI26</id>
        <label>IPO11</label>
    </interactant>
    <organismsDiffer>false</organismsDiffer>
    <experiments>2</experiments>
</comment>
<comment type="interaction">
    <interactant intactId="EBI-351962">
        <id>P17844</id>
    </interactant>
    <interactant intactId="EBI-1783068">
        <id>O95983</id>
        <label>MBD3</label>
    </interactant>
    <organismsDiffer>false</organismsDiffer>
    <experiments>4</experiments>
</comment>
<comment type="interaction">
    <interactant intactId="EBI-351962">
        <id>P17844</id>
    </interactant>
    <interactant intactId="EBI-308320">
        <id>O94916</id>
        <label>NFAT5</label>
    </interactant>
    <organismsDiffer>false</organismsDiffer>
    <experiments>4</experiments>
</comment>
<comment type="interaction">
    <interactant intactId="EBI-351962">
        <id>P17844</id>
    </interactant>
    <interactant intactId="EBI-295301">
        <id>P24928</id>
        <label>POLR2A</label>
    </interactant>
    <organismsDiffer>false</organismsDiffer>
    <experiments>3</experiments>
</comment>
<comment type="interaction">
    <interactant intactId="EBI-351962">
        <id>P17844</id>
    </interactant>
    <interactant intactId="EBI-744603">
        <id>Q15637</id>
        <label>SF1</label>
    </interactant>
    <organismsDiffer>false</organismsDiffer>
    <experiments>3</experiments>
</comment>
<comment type="interaction">
    <interactant intactId="EBI-351962">
        <id>P17844</id>
    </interactant>
    <interactant intactId="EBI-1567153">
        <id>Q15797</id>
        <label>SMAD1</label>
    </interactant>
    <organismsDiffer>false</organismsDiffer>
    <experiments>4</experiments>
</comment>
<comment type="interaction">
    <interactant intactId="EBI-351962">
        <id>P17844</id>
    </interactant>
    <interactant intactId="EBI-347161">
        <id>P84022</id>
        <label>SMAD3</label>
    </interactant>
    <organismsDiffer>false</organismsDiffer>
    <experiments>2</experiments>
</comment>
<comment type="interaction">
    <interactant intactId="EBI-351962">
        <id>P17844</id>
    </interactant>
    <interactant intactId="EBI-6391136">
        <id>Q99717</id>
        <label>SMAD5</label>
    </interactant>
    <organismsDiffer>false</organismsDiffer>
    <experiments>3</experiments>
</comment>
<comment type="interaction">
    <interactant intactId="EBI-351962">
        <id>P17844</id>
    </interactant>
    <interactant intactId="EBI-372899">
        <id>Q13148</id>
        <label>TARDBP</label>
    </interactant>
    <organismsDiffer>false</organismsDiffer>
    <experiments>3</experiments>
</comment>
<comment type="interaction">
    <interactant intactId="EBI-351962">
        <id>P17844</id>
    </interactant>
    <interactant intactId="EBI-366083">
        <id>P04637</id>
        <label>TP53</label>
    </interactant>
    <organismsDiffer>false</organismsDiffer>
    <experiments>6</experiments>
</comment>
<comment type="interaction">
    <interactant intactId="EBI-351962">
        <id>P17844</id>
    </interactant>
    <interactant intactId="EBI-3895849">
        <id>P04637-1</id>
        <label>TP53</label>
    </interactant>
    <organismsDiffer>false</organismsDiffer>
    <experiments>2</experiments>
</comment>
<comment type="interaction">
    <interactant intactId="EBI-351962">
        <id>P17844</id>
    </interactant>
    <interactant intactId="EBI-3895873">
        <id>P04637-7</id>
        <label>TP53</label>
    </interactant>
    <organismsDiffer>false</organismsDiffer>
    <experiments>2</experiments>
</comment>
<comment type="interaction">
    <interactant intactId="EBI-351962">
        <id>P17844</id>
    </interactant>
    <interactant intactId="EBI-296306">
        <id>P45481</id>
        <label>Crebbp</label>
    </interactant>
    <organismsDiffer>true</organismsDiffer>
    <experiments>3</experiments>
</comment>
<comment type="interaction">
    <interactant intactId="EBI-351962">
        <id>P17844</id>
    </interactant>
    <interactant intactId="EBI-1185167">
        <id>Q8AZK7</id>
        <label>EBNA-LP</label>
    </interactant>
    <organismsDiffer>true</organismsDiffer>
    <experiments>2</experiments>
</comment>
<comment type="interaction">
    <interactant intactId="EBI-351962">
        <id>P17844</id>
    </interactant>
    <interactant intactId="EBI-4405734">
        <id>P10085</id>
        <label>Myod1</label>
    </interactant>
    <organismsDiffer>true</organismsDiffer>
    <experiments>3</experiments>
</comment>
<comment type="interaction">
    <interactant intactId="EBI-351962">
        <id>P17844</id>
    </interactant>
    <interactant intactId="EBI-6050669">
        <id>Q1K9H5</id>
        <label>PB1</label>
    </interactant>
    <organismsDiffer>true</organismsDiffer>
    <experiments>2</experiments>
</comment>
<comment type="interaction">
    <interactant intactId="EBI-351962">
        <id>P17844</id>
    </interactant>
    <interactant intactId="EBI-6164309">
        <id>P04618</id>
        <label>rev</label>
    </interactant>
    <organismsDiffer>true</organismsDiffer>
    <experiments>2</experiments>
</comment>
<comment type="interaction">
    <interactant intactId="EBI-351962">
        <id>P17844</id>
    </interactant>
    <interactant intactId="EBI-6119991">
        <id>Q08775-3</id>
        <label>Runx2</label>
    </interactant>
    <organismsDiffer>true</organismsDiffer>
    <experiments>2</experiments>
</comment>
<comment type="interaction">
    <interactant intactId="EBI-351962">
        <id>P17844</id>
    </interactant>
    <interactant intactId="EBI-6904388">
        <id>PRO_0000037577</id>
        <dbReference type="UniProtKB" id="P27958"/>
    </interactant>
    <organismsDiffer>true</organismsDiffer>
    <experiments>12</experiments>
</comment>
<comment type="interaction">
    <interactant intactId="EBI-351962">
        <id>P17844</id>
    </interactant>
    <interactant intactId="EBI-8826747">
        <id>PRO_0000308465</id>
        <dbReference type="UniProtKB" id="P29991"/>
    </interactant>
    <organismsDiffer>true</organismsDiffer>
    <experiments>3</experiments>
</comment>
<comment type="subcellular location">
    <subcellularLocation>
        <location evidence="22">Nucleus</location>
    </subcellularLocation>
    <subcellularLocation>
        <location evidence="5 18">Nucleus</location>
        <location evidence="5 18">Nucleolus</location>
    </subcellularLocation>
    <subcellularLocation>
        <location evidence="23">Nucleus speckle</location>
    </subcellularLocation>
    <subcellularLocation>
        <location evidence="22">Cytoplasm</location>
    </subcellularLocation>
    <text evidence="22">During the G0 phase, predominantly located in the nucleus. Cytoplasmic levels increase during the G1/S phase. During the M phase, located at the vicinity of the condensed chromosomes. At G1, localizes in the cytoplasm.</text>
</comment>
<comment type="alternative products">
    <event type="alternative splicing"/>
    <isoform>
        <id>P17844-1</id>
        <name>1</name>
        <sequence type="displayed"/>
    </isoform>
    <isoform>
        <id>P17844-2</id>
        <name>2</name>
        <sequence type="described" ref="VSP_056154"/>
    </isoform>
</comment>
<comment type="PTM">
    <text>Arg-502 is dimethylated, probably to asymmetric dimethylarginine.</text>
</comment>
<comment type="PTM">
    <text evidence="12 19">Sumoylated; sumoylation, promoted by PIAS1, promotes interaction with HDAC1 and transcriptional repression activity. Sumoylation also significantly increases stability, and reduces polyubiquitination.</text>
</comment>
<comment type="PTM">
    <text evidence="19">Polyubiquitinated, leading to proteasomal degradation.</text>
</comment>
<comment type="PTM">
    <text evidence="22">Weakly phosphorylated in the G1/S phase of the cell cycle and much more at G2/M, especially at Thr and Tyr residues.</text>
</comment>
<comment type="similarity">
    <text evidence="26">Belongs to the DEAD box helicase family. DDX5/DBP2 subfamily.</text>
</comment>
<comment type="caution">
    <text evidence="27 28 29 30">DDX5 was reported to be a transcriptional coactivator of ESR1. However, this study has been retracted due to concerns of image manipulation.</text>
</comment>
<comment type="online information" name="Atlas of Genetics and Cytogenetics in Oncology and Haematology">
    <link uri="https://atlasgeneticsoncology.org/gene/40290/DDX5"/>
</comment>